<name>PEPX_STRA3</name>
<sequence length="761" mass="86844">MRYNQFSYIPTKPNEAFEELKGLGFPLNKKNSDKANLEAFLRHSFLNQTDTDYALSLLIVDAKTDALTFFKSNSDLTLENLQWIYLQLLGFVPFVDFKDPKAFLQDINFPVSYDNIFQSLHHLLACRGKSGNTLIDQLVADGLLHADNHYHFFNGKSLATFNTNQLIREVVYVEISLDTMSSGEHDLVKVNIIRPTTEHTIPTMMTASPYHQGINDPAADQKTYQMEGALAVKQPKHIQVDTKPFKEEVKHPSKLPISPATESFTHIDSYSLNDYFLSRGFANIYVSGVGTAGSTGFMTSGDYQQIQSFKAVIDWLNGKVTAFTSHKRDKQVKADWSNGLVATTGKSYLGTMSTGLATTGVEGLKVIIAEAAISTWYDYYRENGLVCSPGGYPGEDLDVLTELTYSRNLLAGDYIKNNDCYQALLNEQSKAIDRQSGDYNQYWHDRNYLTHVNNVKSRVVYTHGLQDWNVKPRHVYKVFNALPQTIKKHLFLHQGQHVYMHNWQSIDFRESMNALLSQELLGIDNHFQLEEVIWQDNTTEQTWQVLDAFGGNHQEQIGLGDSKKLIDNHYDKEAFDTYCKDFNVFKNDLFKGNNKTNQITINLPLKKNYLLNGQCKLHLRVKTSDKKAILSAQILDYGPKKRFKDTPTIKFLNSLDNGKNFAREALRELPFTKDHYRVISKGVLNLQNRTDLLTIEAIEPEQWFDIEFSLQPSIYQLSKGDNLRIILYTTDFEHTIRDNASYSITVDLSQSYLTIPTNQGN</sequence>
<accession>Q8E3H8</accession>
<dbReference type="EC" id="3.4.14.11" evidence="1"/>
<dbReference type="EMBL" id="AL766853">
    <property type="protein sequence ID" value="CAD47440.1"/>
    <property type="molecule type" value="Genomic_DNA"/>
</dbReference>
<dbReference type="RefSeq" id="WP_001270177.1">
    <property type="nucleotide sequence ID" value="NC_004368.1"/>
</dbReference>
<dbReference type="SMR" id="Q8E3H8"/>
<dbReference type="ESTHER" id="strag-pepx">
    <property type="family name" value="Lactobacillus_peptidase"/>
</dbReference>
<dbReference type="KEGG" id="san:gbs1781"/>
<dbReference type="eggNOG" id="COG2936">
    <property type="taxonomic scope" value="Bacteria"/>
</dbReference>
<dbReference type="HOGENOM" id="CLU_011800_0_0_9"/>
<dbReference type="Proteomes" id="UP000000823">
    <property type="component" value="Chromosome"/>
</dbReference>
<dbReference type="GO" id="GO:0005737">
    <property type="term" value="C:cytoplasm"/>
    <property type="evidence" value="ECO:0007669"/>
    <property type="project" value="UniProtKB-SubCell"/>
</dbReference>
<dbReference type="GO" id="GO:0004177">
    <property type="term" value="F:aminopeptidase activity"/>
    <property type="evidence" value="ECO:0007669"/>
    <property type="project" value="UniProtKB-KW"/>
</dbReference>
<dbReference type="GO" id="GO:0008239">
    <property type="term" value="F:dipeptidyl-peptidase activity"/>
    <property type="evidence" value="ECO:0007669"/>
    <property type="project" value="UniProtKB-UniRule"/>
</dbReference>
<dbReference type="GO" id="GO:0008236">
    <property type="term" value="F:serine-type peptidase activity"/>
    <property type="evidence" value="ECO:0007669"/>
    <property type="project" value="UniProtKB-KW"/>
</dbReference>
<dbReference type="GO" id="GO:0006508">
    <property type="term" value="P:proteolysis"/>
    <property type="evidence" value="ECO:0007669"/>
    <property type="project" value="UniProtKB-KW"/>
</dbReference>
<dbReference type="Gene3D" id="1.10.246.70">
    <property type="match status" value="1"/>
</dbReference>
<dbReference type="Gene3D" id="3.40.50.1820">
    <property type="entry name" value="alpha/beta hydrolase"/>
    <property type="match status" value="1"/>
</dbReference>
<dbReference type="Gene3D" id="2.60.120.260">
    <property type="entry name" value="Galactose-binding domain-like"/>
    <property type="match status" value="1"/>
</dbReference>
<dbReference type="HAMAP" id="MF_00698">
    <property type="entry name" value="Aminopeptidase_S15"/>
    <property type="match status" value="1"/>
</dbReference>
<dbReference type="InterPro" id="IPR029058">
    <property type="entry name" value="AB_hydrolase_fold"/>
</dbReference>
<dbReference type="InterPro" id="IPR008979">
    <property type="entry name" value="Galactose-bd-like_sf"/>
</dbReference>
<dbReference type="InterPro" id="IPR008252">
    <property type="entry name" value="Pept_S15_Xpro"/>
</dbReference>
<dbReference type="InterPro" id="IPR015251">
    <property type="entry name" value="PepX_N_dom"/>
</dbReference>
<dbReference type="InterPro" id="IPR036313">
    <property type="entry name" value="PepX_N_dom_sf"/>
</dbReference>
<dbReference type="InterPro" id="IPR000383">
    <property type="entry name" value="Xaa-Pro-like_dom"/>
</dbReference>
<dbReference type="InterPro" id="IPR013736">
    <property type="entry name" value="Xaa-Pro_dipept_C"/>
</dbReference>
<dbReference type="InterPro" id="IPR050585">
    <property type="entry name" value="Xaa-Pro_dipeptidyl-ppase/CocE"/>
</dbReference>
<dbReference type="NCBIfam" id="NF003783">
    <property type="entry name" value="PRK05371.1-4"/>
    <property type="match status" value="1"/>
</dbReference>
<dbReference type="PANTHER" id="PTHR43056:SF10">
    <property type="entry name" value="COCE_NOND FAMILY, PUTATIVE (AFU_ORTHOLOGUE AFUA_7G00600)-RELATED"/>
    <property type="match status" value="1"/>
</dbReference>
<dbReference type="PANTHER" id="PTHR43056">
    <property type="entry name" value="PEPTIDASE S9 PROLYL OLIGOPEPTIDASE"/>
    <property type="match status" value="1"/>
</dbReference>
<dbReference type="Pfam" id="PF02129">
    <property type="entry name" value="Peptidase_S15"/>
    <property type="match status" value="1"/>
</dbReference>
<dbReference type="Pfam" id="PF08530">
    <property type="entry name" value="PepX_C"/>
    <property type="match status" value="1"/>
</dbReference>
<dbReference type="Pfam" id="PF09168">
    <property type="entry name" value="PepX_N"/>
    <property type="match status" value="1"/>
</dbReference>
<dbReference type="PRINTS" id="PR00923">
    <property type="entry name" value="LACTOPTASE"/>
</dbReference>
<dbReference type="SMART" id="SM00939">
    <property type="entry name" value="PepX_C"/>
    <property type="match status" value="1"/>
</dbReference>
<dbReference type="SMART" id="SM00940">
    <property type="entry name" value="PepX_N"/>
    <property type="match status" value="1"/>
</dbReference>
<dbReference type="SUPFAM" id="SSF53474">
    <property type="entry name" value="alpha/beta-Hydrolases"/>
    <property type="match status" value="1"/>
</dbReference>
<dbReference type="SUPFAM" id="SSF49785">
    <property type="entry name" value="Galactose-binding domain-like"/>
    <property type="match status" value="1"/>
</dbReference>
<dbReference type="SUPFAM" id="SSF81761">
    <property type="entry name" value="X-Prolyl dipeptidyl aminopeptidase PepX, N-terminal domain"/>
    <property type="match status" value="1"/>
</dbReference>
<protein>
    <recommendedName>
        <fullName evidence="1">Xaa-Pro dipeptidyl-peptidase</fullName>
        <ecNumber evidence="1">3.4.14.11</ecNumber>
    </recommendedName>
    <alternativeName>
        <fullName evidence="1">X-Pro dipeptidyl-peptidase</fullName>
    </alternativeName>
    <alternativeName>
        <fullName evidence="1">X-prolyl-dipeptidyl aminopeptidase</fullName>
        <shortName evidence="1">X-PDAP</shortName>
    </alternativeName>
</protein>
<feature type="chain" id="PRO_0000220224" description="Xaa-Pro dipeptidyl-peptidase">
    <location>
        <begin position="1"/>
        <end position="761"/>
    </location>
</feature>
<feature type="active site" description="Charge relay system" evidence="1">
    <location>
        <position position="347"/>
    </location>
</feature>
<feature type="active site" description="Charge relay system" evidence="1">
    <location>
        <position position="467"/>
    </location>
</feature>
<feature type="active site" description="Charge relay system" evidence="1">
    <location>
        <position position="497"/>
    </location>
</feature>
<comment type="function">
    <text evidence="1">Removes N-terminal dipeptides sequentially from polypeptides having unsubstituted N-termini provided that the penultimate residue is proline.</text>
</comment>
<comment type="catalytic activity">
    <reaction evidence="1">
        <text>Hydrolyzes Xaa-Pro-|- bonds to release unblocked, N-terminal dipeptides from substrates including Ala-Pro-|-p-nitroanilide and (sequentially) Tyr-Pro-|-Phe-Pro-|-Gly-Pro-|-Ile.</text>
        <dbReference type="EC" id="3.4.14.11"/>
    </reaction>
</comment>
<comment type="subunit">
    <text evidence="1">Homodimer.</text>
</comment>
<comment type="subcellular location">
    <subcellularLocation>
        <location evidence="1">Cytoplasm</location>
    </subcellularLocation>
</comment>
<comment type="similarity">
    <text evidence="1">Belongs to the peptidase S15 family.</text>
</comment>
<keyword id="KW-0031">Aminopeptidase</keyword>
<keyword id="KW-0963">Cytoplasm</keyword>
<keyword id="KW-0378">Hydrolase</keyword>
<keyword id="KW-0645">Protease</keyword>
<keyword id="KW-0720">Serine protease</keyword>
<organism>
    <name type="scientific">Streptococcus agalactiae serotype III (strain NEM316)</name>
    <dbReference type="NCBI Taxonomy" id="211110"/>
    <lineage>
        <taxon>Bacteria</taxon>
        <taxon>Bacillati</taxon>
        <taxon>Bacillota</taxon>
        <taxon>Bacilli</taxon>
        <taxon>Lactobacillales</taxon>
        <taxon>Streptococcaceae</taxon>
        <taxon>Streptococcus</taxon>
    </lineage>
</organism>
<reference key="1">
    <citation type="journal article" date="2002" name="Mol. Microbiol.">
        <title>Genome sequence of Streptococcus agalactiae, a pathogen causing invasive neonatal disease.</title>
        <authorList>
            <person name="Glaser P."/>
            <person name="Rusniok C."/>
            <person name="Buchrieser C."/>
            <person name="Chevalier F."/>
            <person name="Frangeul L."/>
            <person name="Msadek T."/>
            <person name="Zouine M."/>
            <person name="Couve E."/>
            <person name="Lalioui L."/>
            <person name="Poyart C."/>
            <person name="Trieu-Cuot P."/>
            <person name="Kunst F."/>
        </authorList>
    </citation>
    <scope>NUCLEOTIDE SEQUENCE [LARGE SCALE GENOMIC DNA]</scope>
    <source>
        <strain>NEM316</strain>
    </source>
</reference>
<proteinExistence type="inferred from homology"/>
<gene>
    <name evidence="1" type="primary">pepX</name>
    <name type="ordered locus">gbs1781</name>
</gene>
<evidence type="ECO:0000255" key="1">
    <source>
        <dbReference type="HAMAP-Rule" id="MF_00698"/>
    </source>
</evidence>